<comment type="catalytic activity">
    <reaction evidence="1">
        <text>D-altronate + NAD(+) = keto-D-tagaturonate + NADH + H(+)</text>
        <dbReference type="Rhea" id="RHEA:17813"/>
        <dbReference type="ChEBI" id="CHEBI:15378"/>
        <dbReference type="ChEBI" id="CHEBI:17360"/>
        <dbReference type="ChEBI" id="CHEBI:17886"/>
        <dbReference type="ChEBI" id="CHEBI:57540"/>
        <dbReference type="ChEBI" id="CHEBI:57945"/>
        <dbReference type="EC" id="1.1.1.58"/>
    </reaction>
</comment>
<comment type="pathway">
    <text evidence="1">Carbohydrate metabolism; pentose and glucuronate interconversion.</text>
</comment>
<comment type="similarity">
    <text evidence="1">Belongs to the mannitol dehydrogenase family. UxaB subfamily.</text>
</comment>
<evidence type="ECO:0000255" key="1">
    <source>
        <dbReference type="HAMAP-Rule" id="MF_00670"/>
    </source>
</evidence>
<keyword id="KW-0520">NAD</keyword>
<keyword id="KW-0560">Oxidoreductase</keyword>
<keyword id="KW-1185">Reference proteome</keyword>
<name>UXAB_ECOK1</name>
<dbReference type="EC" id="1.1.1.58" evidence="1"/>
<dbReference type="EMBL" id="CP000468">
    <property type="protein sequence ID" value="ABJ00941.1"/>
    <property type="molecule type" value="Genomic_DNA"/>
</dbReference>
<dbReference type="RefSeq" id="WP_000854637.1">
    <property type="nucleotide sequence ID" value="NZ_CADILS010000002.1"/>
</dbReference>
<dbReference type="SMR" id="A1ABA1"/>
<dbReference type="KEGG" id="ecv:APECO1_641"/>
<dbReference type="HOGENOM" id="CLU_027324_1_0_6"/>
<dbReference type="UniPathway" id="UPA00246"/>
<dbReference type="Proteomes" id="UP000008216">
    <property type="component" value="Chromosome"/>
</dbReference>
<dbReference type="GO" id="GO:0005829">
    <property type="term" value="C:cytosol"/>
    <property type="evidence" value="ECO:0007669"/>
    <property type="project" value="TreeGrafter"/>
</dbReference>
<dbReference type="GO" id="GO:0008926">
    <property type="term" value="F:mannitol-1-phosphate 5-dehydrogenase activity"/>
    <property type="evidence" value="ECO:0007669"/>
    <property type="project" value="TreeGrafter"/>
</dbReference>
<dbReference type="GO" id="GO:0009026">
    <property type="term" value="F:tagaturonate reductase activity"/>
    <property type="evidence" value="ECO:0007669"/>
    <property type="project" value="UniProtKB-UniRule"/>
</dbReference>
<dbReference type="GO" id="GO:0019698">
    <property type="term" value="P:D-galacturonate catabolic process"/>
    <property type="evidence" value="ECO:0007669"/>
    <property type="project" value="TreeGrafter"/>
</dbReference>
<dbReference type="GO" id="GO:0019592">
    <property type="term" value="P:mannitol catabolic process"/>
    <property type="evidence" value="ECO:0007669"/>
    <property type="project" value="TreeGrafter"/>
</dbReference>
<dbReference type="FunFam" id="1.10.1040.10:FF:000018">
    <property type="entry name" value="Altronate oxidoreductase"/>
    <property type="match status" value="1"/>
</dbReference>
<dbReference type="FunFam" id="3.40.50.720:FF:000153">
    <property type="entry name" value="Altronate oxidoreductase"/>
    <property type="match status" value="1"/>
</dbReference>
<dbReference type="Gene3D" id="1.10.1040.10">
    <property type="entry name" value="N-(1-d-carboxylethyl)-l-norvaline Dehydrogenase, domain 2"/>
    <property type="match status" value="1"/>
</dbReference>
<dbReference type="Gene3D" id="3.40.50.720">
    <property type="entry name" value="NAD(P)-binding Rossmann-like Domain"/>
    <property type="match status" value="1"/>
</dbReference>
<dbReference type="HAMAP" id="MF_00670">
    <property type="entry name" value="Altron_oxidoreduct"/>
    <property type="match status" value="1"/>
</dbReference>
<dbReference type="InterPro" id="IPR008927">
    <property type="entry name" value="6-PGluconate_DH-like_C_sf"/>
</dbReference>
<dbReference type="InterPro" id="IPR013328">
    <property type="entry name" value="6PGD_dom2"/>
</dbReference>
<dbReference type="InterPro" id="IPR023668">
    <property type="entry name" value="Altronate_OxRdtase"/>
</dbReference>
<dbReference type="InterPro" id="IPR013118">
    <property type="entry name" value="Mannitol_DH_C"/>
</dbReference>
<dbReference type="InterPro" id="IPR013131">
    <property type="entry name" value="Mannitol_DH_N"/>
</dbReference>
<dbReference type="InterPro" id="IPR036291">
    <property type="entry name" value="NAD(P)-bd_dom_sf"/>
</dbReference>
<dbReference type="NCBIfam" id="NF002969">
    <property type="entry name" value="PRK03643.1"/>
    <property type="match status" value="1"/>
</dbReference>
<dbReference type="PANTHER" id="PTHR30524:SF0">
    <property type="entry name" value="ALTRONATE OXIDOREDUCTASE-RELATED"/>
    <property type="match status" value="1"/>
</dbReference>
<dbReference type="PANTHER" id="PTHR30524">
    <property type="entry name" value="MANNITOL-1-PHOSPHATE 5-DEHYDROGENASE"/>
    <property type="match status" value="1"/>
</dbReference>
<dbReference type="Pfam" id="PF01232">
    <property type="entry name" value="Mannitol_dh"/>
    <property type="match status" value="1"/>
</dbReference>
<dbReference type="Pfam" id="PF08125">
    <property type="entry name" value="Mannitol_dh_C"/>
    <property type="match status" value="1"/>
</dbReference>
<dbReference type="SUPFAM" id="SSF48179">
    <property type="entry name" value="6-phosphogluconate dehydrogenase C-terminal domain-like"/>
    <property type="match status" value="1"/>
</dbReference>
<dbReference type="SUPFAM" id="SSF51735">
    <property type="entry name" value="NAD(P)-binding Rossmann-fold domains"/>
    <property type="match status" value="1"/>
</dbReference>
<gene>
    <name evidence="1" type="primary">uxaB</name>
    <name type="ordered locus">Ecok1_14470</name>
    <name type="ORF">APECO1_641</name>
</gene>
<protein>
    <recommendedName>
        <fullName evidence="1">Altronate oxidoreductase</fullName>
        <ecNumber evidence="1">1.1.1.58</ecNumber>
    </recommendedName>
    <alternativeName>
        <fullName evidence="1">Tagaturonate dehydrogenase</fullName>
    </alternativeName>
    <alternativeName>
        <fullName evidence="1">Tagaturonate reductase</fullName>
    </alternativeName>
</protein>
<reference key="1">
    <citation type="journal article" date="2007" name="J. Bacteriol.">
        <title>The genome sequence of avian pathogenic Escherichia coli strain O1:K1:H7 shares strong similarities with human extraintestinal pathogenic E. coli genomes.</title>
        <authorList>
            <person name="Johnson T.J."/>
            <person name="Kariyawasam S."/>
            <person name="Wannemuehler Y."/>
            <person name="Mangiamele P."/>
            <person name="Johnson S.J."/>
            <person name="Doetkott C."/>
            <person name="Skyberg J.A."/>
            <person name="Lynne A.M."/>
            <person name="Johnson J.R."/>
            <person name="Nolan L.K."/>
        </authorList>
    </citation>
    <scope>NUCLEOTIDE SEQUENCE [LARGE SCALE GENOMIC DNA]</scope>
</reference>
<proteinExistence type="inferred from homology"/>
<accession>A1ABA1</accession>
<sequence>MKTLNRRDFPGAQYPERIIQFGEGNFLRAFVDWQIDLLNEHTDLNSGVVVVRPIETSFPPSLSTQDGLYTTIIRGLNEKGEAVSDARLIRSVNREISVYSEYDEFLKLAHNPEMRFVFSNTTEAGISYHAGDKFDDAPAVSYPAKLTRLLFERFSHFNGALDKGWIIIPCELIDYNGDALRELVLRYAQEWALPEAFIQWLDQANSFCSTLVDRIVTGYPRDEVAKLEEELGYHDGFLDTAEHFYLFVIQGPKSLATELRLDKYPLNVLIVDDIKPYKERKVAILNGAHTALVPVAFQAGLDTVGEAMNDAEICAFVEKAIYEEIIPVLDLPRDELESFASAVTGRFRNPYIKHQLLSIALNGMTKFRTRILPQLLAGQKANGTLPARLTFALAALIAFYRGERNGETYPVQDDAHWLERYQQLWSQYRDRVIGTQELVAIVLAEKDHWEQDLTQVPGLVEQVANDLDAILEKGMREAVRPLC</sequence>
<organism>
    <name type="scientific">Escherichia coli O1:K1 / APEC</name>
    <dbReference type="NCBI Taxonomy" id="405955"/>
    <lineage>
        <taxon>Bacteria</taxon>
        <taxon>Pseudomonadati</taxon>
        <taxon>Pseudomonadota</taxon>
        <taxon>Gammaproteobacteria</taxon>
        <taxon>Enterobacterales</taxon>
        <taxon>Enterobacteriaceae</taxon>
        <taxon>Escherichia</taxon>
    </lineage>
</organism>
<feature type="chain" id="PRO_1000044702" description="Altronate oxidoreductase">
    <location>
        <begin position="1"/>
        <end position="483"/>
    </location>
</feature>
<feature type="binding site" evidence="1">
    <location>
        <begin position="18"/>
        <end position="29"/>
    </location>
    <ligand>
        <name>NAD(+)</name>
        <dbReference type="ChEBI" id="CHEBI:57540"/>
    </ligand>
</feature>